<sequence length="78" mass="8368">MSDIAERVKKIVIDHLGVDADKVVESASFIDDLGADSLDTVELVMAFEEEFGVEIPDDAADSILTVGDAVKFIEKAQA</sequence>
<organism>
    <name type="scientific">Rhizobium etli (strain ATCC 51251 / DSM 11541 / JCM 21823 / NBRC 15573 / CFN 42)</name>
    <dbReference type="NCBI Taxonomy" id="347834"/>
    <lineage>
        <taxon>Bacteria</taxon>
        <taxon>Pseudomonadati</taxon>
        <taxon>Pseudomonadota</taxon>
        <taxon>Alphaproteobacteria</taxon>
        <taxon>Hyphomicrobiales</taxon>
        <taxon>Rhizobiaceae</taxon>
        <taxon>Rhizobium/Agrobacterium group</taxon>
        <taxon>Rhizobium</taxon>
    </lineage>
</organism>
<feature type="chain" id="PRO_1000066669" description="Acyl carrier protein">
    <location>
        <begin position="1"/>
        <end position="78"/>
    </location>
</feature>
<feature type="domain" description="Carrier" evidence="2">
    <location>
        <begin position="2"/>
        <end position="77"/>
    </location>
</feature>
<feature type="modified residue" description="O-(pantetheine 4'-phosphoryl)serine" evidence="2">
    <location>
        <position position="37"/>
    </location>
</feature>
<gene>
    <name evidence="1" type="primary">acpP</name>
    <name type="ordered locus">RHE_CH01444</name>
</gene>
<protein>
    <recommendedName>
        <fullName evidence="1">Acyl carrier protein</fullName>
        <shortName evidence="1">ACP</shortName>
    </recommendedName>
</protein>
<comment type="function">
    <text evidence="1">Carrier of the growing fatty acid chain in fatty acid biosynthesis.</text>
</comment>
<comment type="pathway">
    <text evidence="1">Lipid metabolism; fatty acid biosynthesis.</text>
</comment>
<comment type="subcellular location">
    <subcellularLocation>
        <location evidence="1">Cytoplasm</location>
    </subcellularLocation>
</comment>
<comment type="PTM">
    <text evidence="1">4'-phosphopantetheine is transferred from CoA to a specific serine of apo-ACP by AcpS. This modification is essential for activity because fatty acids are bound in thioester linkage to the sulfhydryl of the prosthetic group.</text>
</comment>
<comment type="similarity">
    <text evidence="1">Belongs to the acyl carrier protein (ACP) family.</text>
</comment>
<accession>Q2KA89</accession>
<dbReference type="EMBL" id="CP000133">
    <property type="protein sequence ID" value="ABC90247.1"/>
    <property type="molecule type" value="Genomic_DNA"/>
</dbReference>
<dbReference type="RefSeq" id="WP_003547058.1">
    <property type="nucleotide sequence ID" value="NC_007761.1"/>
</dbReference>
<dbReference type="SMR" id="Q2KA89"/>
<dbReference type="KEGG" id="ret:RHE_CH01444"/>
<dbReference type="eggNOG" id="COG0236">
    <property type="taxonomic scope" value="Bacteria"/>
</dbReference>
<dbReference type="HOGENOM" id="CLU_108696_5_1_5"/>
<dbReference type="OrthoDB" id="9804551at2"/>
<dbReference type="UniPathway" id="UPA00094"/>
<dbReference type="Proteomes" id="UP000001936">
    <property type="component" value="Chromosome"/>
</dbReference>
<dbReference type="GO" id="GO:0005829">
    <property type="term" value="C:cytosol"/>
    <property type="evidence" value="ECO:0007669"/>
    <property type="project" value="TreeGrafter"/>
</dbReference>
<dbReference type="GO" id="GO:0016020">
    <property type="term" value="C:membrane"/>
    <property type="evidence" value="ECO:0007669"/>
    <property type="project" value="GOC"/>
</dbReference>
<dbReference type="GO" id="GO:0000035">
    <property type="term" value="F:acyl binding"/>
    <property type="evidence" value="ECO:0007669"/>
    <property type="project" value="TreeGrafter"/>
</dbReference>
<dbReference type="GO" id="GO:0000036">
    <property type="term" value="F:acyl carrier activity"/>
    <property type="evidence" value="ECO:0007669"/>
    <property type="project" value="UniProtKB-UniRule"/>
</dbReference>
<dbReference type="GO" id="GO:0031177">
    <property type="term" value="F:phosphopantetheine binding"/>
    <property type="evidence" value="ECO:0007669"/>
    <property type="project" value="InterPro"/>
</dbReference>
<dbReference type="GO" id="GO:0009245">
    <property type="term" value="P:lipid A biosynthetic process"/>
    <property type="evidence" value="ECO:0007669"/>
    <property type="project" value="TreeGrafter"/>
</dbReference>
<dbReference type="FunFam" id="1.10.1200.10:FF:000001">
    <property type="entry name" value="Acyl carrier protein"/>
    <property type="match status" value="1"/>
</dbReference>
<dbReference type="Gene3D" id="1.10.1200.10">
    <property type="entry name" value="ACP-like"/>
    <property type="match status" value="1"/>
</dbReference>
<dbReference type="HAMAP" id="MF_01217">
    <property type="entry name" value="Acyl_carrier"/>
    <property type="match status" value="1"/>
</dbReference>
<dbReference type="InterPro" id="IPR003231">
    <property type="entry name" value="ACP"/>
</dbReference>
<dbReference type="InterPro" id="IPR036736">
    <property type="entry name" value="ACP-like_sf"/>
</dbReference>
<dbReference type="InterPro" id="IPR020806">
    <property type="entry name" value="PKS_PP-bd"/>
</dbReference>
<dbReference type="InterPro" id="IPR009081">
    <property type="entry name" value="PP-bd_ACP"/>
</dbReference>
<dbReference type="InterPro" id="IPR006162">
    <property type="entry name" value="Ppantetheine_attach_site"/>
</dbReference>
<dbReference type="NCBIfam" id="TIGR00517">
    <property type="entry name" value="acyl_carrier"/>
    <property type="match status" value="1"/>
</dbReference>
<dbReference type="NCBIfam" id="NF002148">
    <property type="entry name" value="PRK00982.1-2"/>
    <property type="match status" value="1"/>
</dbReference>
<dbReference type="NCBIfam" id="NF002149">
    <property type="entry name" value="PRK00982.1-3"/>
    <property type="match status" value="1"/>
</dbReference>
<dbReference type="NCBIfam" id="NF002150">
    <property type="entry name" value="PRK00982.1-4"/>
    <property type="match status" value="1"/>
</dbReference>
<dbReference type="NCBIfam" id="NF002151">
    <property type="entry name" value="PRK00982.1-5"/>
    <property type="match status" value="1"/>
</dbReference>
<dbReference type="PANTHER" id="PTHR20863">
    <property type="entry name" value="ACYL CARRIER PROTEIN"/>
    <property type="match status" value="1"/>
</dbReference>
<dbReference type="PANTHER" id="PTHR20863:SF76">
    <property type="entry name" value="CARRIER DOMAIN-CONTAINING PROTEIN"/>
    <property type="match status" value="1"/>
</dbReference>
<dbReference type="Pfam" id="PF00550">
    <property type="entry name" value="PP-binding"/>
    <property type="match status" value="1"/>
</dbReference>
<dbReference type="SMART" id="SM00823">
    <property type="entry name" value="PKS_PP"/>
    <property type="match status" value="1"/>
</dbReference>
<dbReference type="SUPFAM" id="SSF47336">
    <property type="entry name" value="ACP-like"/>
    <property type="match status" value="1"/>
</dbReference>
<dbReference type="PROSITE" id="PS50075">
    <property type="entry name" value="CARRIER"/>
    <property type="match status" value="1"/>
</dbReference>
<dbReference type="PROSITE" id="PS00012">
    <property type="entry name" value="PHOSPHOPANTETHEINE"/>
    <property type="match status" value="1"/>
</dbReference>
<keyword id="KW-0963">Cytoplasm</keyword>
<keyword id="KW-0275">Fatty acid biosynthesis</keyword>
<keyword id="KW-0276">Fatty acid metabolism</keyword>
<keyword id="KW-0444">Lipid biosynthesis</keyword>
<keyword id="KW-0443">Lipid metabolism</keyword>
<keyword id="KW-0596">Phosphopantetheine</keyword>
<keyword id="KW-0597">Phosphoprotein</keyword>
<keyword id="KW-1185">Reference proteome</keyword>
<reference key="1">
    <citation type="journal article" date="2006" name="Proc. Natl. Acad. Sci. U.S.A.">
        <title>The partitioned Rhizobium etli genome: genetic and metabolic redundancy in seven interacting replicons.</title>
        <authorList>
            <person name="Gonzalez V."/>
            <person name="Santamaria R.I."/>
            <person name="Bustos P."/>
            <person name="Hernandez-Gonzalez I."/>
            <person name="Medrano-Soto A."/>
            <person name="Moreno-Hagelsieb G."/>
            <person name="Janga S.C."/>
            <person name="Ramirez M.A."/>
            <person name="Jimenez-Jacinto V."/>
            <person name="Collado-Vides J."/>
            <person name="Davila G."/>
        </authorList>
    </citation>
    <scope>NUCLEOTIDE SEQUENCE [LARGE SCALE GENOMIC DNA]</scope>
    <source>
        <strain>ATCC 51251 / DSM 11541 / JCM 21823 / NBRC 15573 / CFN 42</strain>
    </source>
</reference>
<proteinExistence type="inferred from homology"/>
<name>ACP_RHIEC</name>
<evidence type="ECO:0000255" key="1">
    <source>
        <dbReference type="HAMAP-Rule" id="MF_01217"/>
    </source>
</evidence>
<evidence type="ECO:0000255" key="2">
    <source>
        <dbReference type="PROSITE-ProRule" id="PRU00258"/>
    </source>
</evidence>